<gene>
    <name evidence="1" type="primary">rpiA</name>
    <name type="ordered locus">MGAS10270_Spy0753</name>
</gene>
<name>RPIA_STRPD</name>
<protein>
    <recommendedName>
        <fullName evidence="1">Ribose-5-phosphate isomerase A</fullName>
        <ecNumber evidence="1">5.3.1.6</ecNumber>
    </recommendedName>
    <alternativeName>
        <fullName evidence="1">Phosphoriboisomerase A</fullName>
        <shortName evidence="1">PRI</shortName>
    </alternativeName>
</protein>
<proteinExistence type="inferred from homology"/>
<accession>Q1JHB8</accession>
<feature type="chain" id="PRO_1000017010" description="Ribose-5-phosphate isomerase A">
    <location>
        <begin position="1"/>
        <end position="227"/>
    </location>
</feature>
<feature type="active site" description="Proton acceptor" evidence="1">
    <location>
        <position position="104"/>
    </location>
</feature>
<feature type="binding site" evidence="1">
    <location>
        <begin position="26"/>
        <end position="29"/>
    </location>
    <ligand>
        <name>substrate</name>
    </ligand>
</feature>
<feature type="binding site" evidence="1">
    <location>
        <begin position="82"/>
        <end position="85"/>
    </location>
    <ligand>
        <name>substrate</name>
    </ligand>
</feature>
<feature type="binding site" evidence="1">
    <location>
        <begin position="95"/>
        <end position="98"/>
    </location>
    <ligand>
        <name>substrate</name>
    </ligand>
</feature>
<feature type="binding site" evidence="1">
    <location>
        <position position="122"/>
    </location>
    <ligand>
        <name>substrate</name>
    </ligand>
</feature>
<evidence type="ECO:0000255" key="1">
    <source>
        <dbReference type="HAMAP-Rule" id="MF_00170"/>
    </source>
</evidence>
<dbReference type="EC" id="5.3.1.6" evidence="1"/>
<dbReference type="EMBL" id="CP000260">
    <property type="protein sequence ID" value="ABF33818.1"/>
    <property type="molecule type" value="Genomic_DNA"/>
</dbReference>
<dbReference type="SMR" id="Q1JHB8"/>
<dbReference type="KEGG" id="sph:MGAS10270_Spy0753"/>
<dbReference type="HOGENOM" id="CLU_056590_1_0_9"/>
<dbReference type="UniPathway" id="UPA00115">
    <property type="reaction ID" value="UER00412"/>
</dbReference>
<dbReference type="Proteomes" id="UP000002436">
    <property type="component" value="Chromosome"/>
</dbReference>
<dbReference type="GO" id="GO:0004751">
    <property type="term" value="F:ribose-5-phosphate isomerase activity"/>
    <property type="evidence" value="ECO:0007669"/>
    <property type="project" value="UniProtKB-UniRule"/>
</dbReference>
<dbReference type="GO" id="GO:0009052">
    <property type="term" value="P:pentose-phosphate shunt, non-oxidative branch"/>
    <property type="evidence" value="ECO:0007669"/>
    <property type="project" value="UniProtKB-UniRule"/>
</dbReference>
<dbReference type="CDD" id="cd01398">
    <property type="entry name" value="RPI_A"/>
    <property type="match status" value="1"/>
</dbReference>
<dbReference type="FunFam" id="3.40.50.1360:FF:000001">
    <property type="entry name" value="Ribose-5-phosphate isomerase A"/>
    <property type="match status" value="1"/>
</dbReference>
<dbReference type="Gene3D" id="3.30.70.260">
    <property type="match status" value="1"/>
</dbReference>
<dbReference type="Gene3D" id="3.40.50.1360">
    <property type="match status" value="1"/>
</dbReference>
<dbReference type="HAMAP" id="MF_00170">
    <property type="entry name" value="Rib_5P_isom_A"/>
    <property type="match status" value="1"/>
</dbReference>
<dbReference type="InterPro" id="IPR037171">
    <property type="entry name" value="NagB/RpiA_transferase-like"/>
</dbReference>
<dbReference type="InterPro" id="IPR050262">
    <property type="entry name" value="Ribose-5P_isomerase"/>
</dbReference>
<dbReference type="InterPro" id="IPR020672">
    <property type="entry name" value="Ribose5P_isomerase_typA_subgr"/>
</dbReference>
<dbReference type="InterPro" id="IPR004788">
    <property type="entry name" value="Ribose5P_isomerase_type_A"/>
</dbReference>
<dbReference type="NCBIfam" id="NF001924">
    <property type="entry name" value="PRK00702.1"/>
    <property type="match status" value="1"/>
</dbReference>
<dbReference type="NCBIfam" id="TIGR00021">
    <property type="entry name" value="rpiA"/>
    <property type="match status" value="1"/>
</dbReference>
<dbReference type="PANTHER" id="PTHR43748">
    <property type="entry name" value="RIBOSE-5-PHOSPHATE ISOMERASE 3, CHLOROPLASTIC-RELATED"/>
    <property type="match status" value="1"/>
</dbReference>
<dbReference type="PANTHER" id="PTHR43748:SF3">
    <property type="entry name" value="RIBOSE-5-PHOSPHATE ISOMERASE 3, CHLOROPLASTIC-RELATED"/>
    <property type="match status" value="1"/>
</dbReference>
<dbReference type="Pfam" id="PF06026">
    <property type="entry name" value="Rib_5-P_isom_A"/>
    <property type="match status" value="1"/>
</dbReference>
<dbReference type="SUPFAM" id="SSF75445">
    <property type="entry name" value="D-ribose-5-phosphate isomerase (RpiA), lid domain"/>
    <property type="match status" value="1"/>
</dbReference>
<dbReference type="SUPFAM" id="SSF100950">
    <property type="entry name" value="NagB/RpiA/CoA transferase-like"/>
    <property type="match status" value="1"/>
</dbReference>
<keyword id="KW-0413">Isomerase</keyword>
<comment type="function">
    <text evidence="1">Catalyzes the reversible conversion of ribose-5-phosphate to ribulose 5-phosphate.</text>
</comment>
<comment type="catalytic activity">
    <reaction evidence="1">
        <text>aldehydo-D-ribose 5-phosphate = D-ribulose 5-phosphate</text>
        <dbReference type="Rhea" id="RHEA:14657"/>
        <dbReference type="ChEBI" id="CHEBI:58121"/>
        <dbReference type="ChEBI" id="CHEBI:58273"/>
        <dbReference type="EC" id="5.3.1.6"/>
    </reaction>
</comment>
<comment type="pathway">
    <text evidence="1">Carbohydrate degradation; pentose phosphate pathway; D-ribose 5-phosphate from D-ribulose 5-phosphate (non-oxidative stage): step 1/1.</text>
</comment>
<comment type="subunit">
    <text evidence="1">Homodimer.</text>
</comment>
<comment type="similarity">
    <text evidence="1">Belongs to the ribose 5-phosphate isomerase family.</text>
</comment>
<reference key="1">
    <citation type="journal article" date="2006" name="Proc. Natl. Acad. Sci. U.S.A.">
        <title>Molecular genetic anatomy of inter- and intraserotype variation in the human bacterial pathogen group A Streptococcus.</title>
        <authorList>
            <person name="Beres S.B."/>
            <person name="Richter E.W."/>
            <person name="Nagiec M.J."/>
            <person name="Sumby P."/>
            <person name="Porcella S.F."/>
            <person name="DeLeo F.R."/>
            <person name="Musser J.M."/>
        </authorList>
    </citation>
    <scope>NUCLEOTIDE SEQUENCE [LARGE SCALE GENOMIC DNA]</scope>
    <source>
        <strain>MGAS10270</strain>
    </source>
</reference>
<organism>
    <name type="scientific">Streptococcus pyogenes serotype M2 (strain MGAS10270)</name>
    <dbReference type="NCBI Taxonomy" id="370552"/>
    <lineage>
        <taxon>Bacteria</taxon>
        <taxon>Bacillati</taxon>
        <taxon>Bacillota</taxon>
        <taxon>Bacilli</taxon>
        <taxon>Lactobacillales</taxon>
        <taxon>Streptococcaceae</taxon>
        <taxon>Streptococcus</taxon>
    </lineage>
</organism>
<sequence>MEALKKIAGVTAAQYVTDGMTIGLGTGSTAYYFVEEIGRRVKQEGLQVVGVTTSSVTSKQAEGLGIPLKSIDDIDSIDLTVDGADEVDKDFNGIKGGGAALLMEKIVATPTKEYIWVVDASKMVEHLGAFKLPVEVVQYGADRLFRVFEKAGYKPSFRMKGDSRLVTDMQNYIIDLDLGCIKDPVAFGHLLDGTVGVVEHGLFNGMVDKVIVASKDGVTVLEAPKAS</sequence>